<protein>
    <recommendedName>
        <fullName evidence="1">Small ribosomal subunit biogenesis GTPase RsgA</fullName>
        <ecNumber evidence="1">3.6.1.-</ecNumber>
    </recommendedName>
</protein>
<dbReference type="EC" id="3.6.1.-" evidence="1"/>
<dbReference type="EMBL" id="CU469464">
    <property type="protein sequence ID" value="CAP18265.1"/>
    <property type="molecule type" value="Genomic_DNA"/>
</dbReference>
<dbReference type="SMR" id="B3R0A1"/>
<dbReference type="STRING" id="37692.ATP_00078"/>
<dbReference type="KEGG" id="pml:ATP_00078"/>
<dbReference type="eggNOG" id="COG1162">
    <property type="taxonomic scope" value="Bacteria"/>
</dbReference>
<dbReference type="HOGENOM" id="CLU_033617_2_1_14"/>
<dbReference type="Proteomes" id="UP000002020">
    <property type="component" value="Chromosome"/>
</dbReference>
<dbReference type="GO" id="GO:0005737">
    <property type="term" value="C:cytoplasm"/>
    <property type="evidence" value="ECO:0007669"/>
    <property type="project" value="UniProtKB-SubCell"/>
</dbReference>
<dbReference type="GO" id="GO:0005525">
    <property type="term" value="F:GTP binding"/>
    <property type="evidence" value="ECO:0007669"/>
    <property type="project" value="UniProtKB-UniRule"/>
</dbReference>
<dbReference type="GO" id="GO:0003924">
    <property type="term" value="F:GTPase activity"/>
    <property type="evidence" value="ECO:0007669"/>
    <property type="project" value="UniProtKB-UniRule"/>
</dbReference>
<dbReference type="GO" id="GO:0046872">
    <property type="term" value="F:metal ion binding"/>
    <property type="evidence" value="ECO:0007669"/>
    <property type="project" value="UniProtKB-KW"/>
</dbReference>
<dbReference type="GO" id="GO:0019843">
    <property type="term" value="F:rRNA binding"/>
    <property type="evidence" value="ECO:0007669"/>
    <property type="project" value="UniProtKB-KW"/>
</dbReference>
<dbReference type="GO" id="GO:0042274">
    <property type="term" value="P:ribosomal small subunit biogenesis"/>
    <property type="evidence" value="ECO:0007669"/>
    <property type="project" value="UniProtKB-UniRule"/>
</dbReference>
<dbReference type="CDD" id="cd01854">
    <property type="entry name" value="YjeQ_EngC"/>
    <property type="match status" value="1"/>
</dbReference>
<dbReference type="Gene3D" id="3.40.50.300">
    <property type="entry name" value="P-loop containing nucleotide triphosphate hydrolases"/>
    <property type="match status" value="1"/>
</dbReference>
<dbReference type="Gene3D" id="1.10.40.50">
    <property type="entry name" value="Probable gtpase engc, domain 3"/>
    <property type="match status" value="1"/>
</dbReference>
<dbReference type="HAMAP" id="MF_01820">
    <property type="entry name" value="GTPase_RsgA"/>
    <property type="match status" value="1"/>
</dbReference>
<dbReference type="InterPro" id="IPR030378">
    <property type="entry name" value="G_CP_dom"/>
</dbReference>
<dbReference type="InterPro" id="IPR027417">
    <property type="entry name" value="P-loop_NTPase"/>
</dbReference>
<dbReference type="InterPro" id="IPR004881">
    <property type="entry name" value="Ribosome_biogen_GTPase_RsgA"/>
</dbReference>
<dbReference type="InterPro" id="IPR010914">
    <property type="entry name" value="RsgA_GTPase_dom"/>
</dbReference>
<dbReference type="NCBIfam" id="TIGR00157">
    <property type="entry name" value="ribosome small subunit-dependent GTPase A"/>
    <property type="match status" value="1"/>
</dbReference>
<dbReference type="PANTHER" id="PTHR32120">
    <property type="entry name" value="SMALL RIBOSOMAL SUBUNIT BIOGENESIS GTPASE RSGA"/>
    <property type="match status" value="1"/>
</dbReference>
<dbReference type="PANTHER" id="PTHR32120:SF11">
    <property type="entry name" value="SMALL RIBOSOMAL SUBUNIT BIOGENESIS GTPASE RSGA 1, MITOCHONDRIAL-RELATED"/>
    <property type="match status" value="1"/>
</dbReference>
<dbReference type="Pfam" id="PF03193">
    <property type="entry name" value="RsgA_GTPase"/>
    <property type="match status" value="1"/>
</dbReference>
<dbReference type="SUPFAM" id="SSF52540">
    <property type="entry name" value="P-loop containing nucleoside triphosphate hydrolases"/>
    <property type="match status" value="1"/>
</dbReference>
<dbReference type="PROSITE" id="PS50936">
    <property type="entry name" value="ENGC_GTPASE"/>
    <property type="match status" value="1"/>
</dbReference>
<dbReference type="PROSITE" id="PS51721">
    <property type="entry name" value="G_CP"/>
    <property type="match status" value="1"/>
</dbReference>
<feature type="chain" id="PRO_1000216050" description="Small ribosomal subunit biogenesis GTPase RsgA">
    <location>
        <begin position="1"/>
        <end position="304"/>
    </location>
</feature>
<feature type="domain" description="CP-type G" evidence="2">
    <location>
        <begin position="70"/>
        <end position="229"/>
    </location>
</feature>
<feature type="binding site" evidence="1">
    <location>
        <begin position="119"/>
        <end position="122"/>
    </location>
    <ligand>
        <name>GTP</name>
        <dbReference type="ChEBI" id="CHEBI:37565"/>
    </ligand>
</feature>
<feature type="binding site" evidence="1">
    <location>
        <begin position="172"/>
        <end position="180"/>
    </location>
    <ligand>
        <name>GTP</name>
        <dbReference type="ChEBI" id="CHEBI:37565"/>
    </ligand>
</feature>
<feature type="binding site" evidence="1">
    <location>
        <position position="253"/>
    </location>
    <ligand>
        <name>Zn(2+)</name>
        <dbReference type="ChEBI" id="CHEBI:29105"/>
    </ligand>
</feature>
<feature type="binding site" evidence="1">
    <location>
        <position position="259"/>
    </location>
    <ligand>
        <name>Zn(2+)</name>
        <dbReference type="ChEBI" id="CHEBI:29105"/>
    </ligand>
</feature>
<feature type="binding site" evidence="1">
    <location>
        <position position="261"/>
    </location>
    <ligand>
        <name>Zn(2+)</name>
        <dbReference type="ChEBI" id="CHEBI:29105"/>
    </ligand>
</feature>
<feature type="binding site" evidence="1">
    <location>
        <position position="267"/>
    </location>
    <ligand>
        <name>Zn(2+)</name>
        <dbReference type="ChEBI" id="CHEBI:29105"/>
    </ligand>
</feature>
<gene>
    <name evidence="1" type="primary">rsgA</name>
    <name type="ordered locus">ATP_00078</name>
</gene>
<proteinExistence type="inferred from homology"/>
<evidence type="ECO:0000255" key="1">
    <source>
        <dbReference type="HAMAP-Rule" id="MF_01820"/>
    </source>
</evidence>
<evidence type="ECO:0000255" key="2">
    <source>
        <dbReference type="PROSITE-ProRule" id="PRU01058"/>
    </source>
</evidence>
<accession>B3R0A1</accession>
<keyword id="KW-0963">Cytoplasm</keyword>
<keyword id="KW-0342">GTP-binding</keyword>
<keyword id="KW-0378">Hydrolase</keyword>
<keyword id="KW-0479">Metal-binding</keyword>
<keyword id="KW-0547">Nucleotide-binding</keyword>
<keyword id="KW-1185">Reference proteome</keyword>
<keyword id="KW-0690">Ribosome biogenesis</keyword>
<keyword id="KW-0694">RNA-binding</keyword>
<keyword id="KW-0699">rRNA-binding</keyword>
<keyword id="KW-0862">Zinc</keyword>
<comment type="function">
    <text evidence="1">One of several proteins that assist in the late maturation steps of the functional core of the 30S ribosomal subunit. Helps release RbfA from mature subunits. May play a role in the assembly of ribosomal proteins into the subunit. Circularly permuted GTPase that catalyzes slow GTP hydrolysis, GTPase activity is stimulated by the 30S ribosomal subunit.</text>
</comment>
<comment type="cofactor">
    <cofactor evidence="1">
        <name>Zn(2+)</name>
        <dbReference type="ChEBI" id="CHEBI:29105"/>
    </cofactor>
    <text evidence="1">Binds 1 zinc ion per subunit.</text>
</comment>
<comment type="subunit">
    <text evidence="1">Monomer. Associates with 30S ribosomal subunit, binds 16S rRNA.</text>
</comment>
<comment type="subcellular location">
    <subcellularLocation>
        <location evidence="1">Cytoplasm</location>
    </subcellularLocation>
</comment>
<comment type="similarity">
    <text evidence="1">Belongs to the TRAFAC class YlqF/YawG GTPase family. RsgA subfamily.</text>
</comment>
<reference key="1">
    <citation type="journal article" date="2008" name="BMC Genomics">
        <title>The linear chromosome of the plant-pathogenic mycoplasma 'Candidatus Phytoplasma mali'.</title>
        <authorList>
            <person name="Kube M."/>
            <person name="Schneider B."/>
            <person name="Kuhl H."/>
            <person name="Dandekar T."/>
            <person name="Heitmann K."/>
            <person name="Migdoll A.M."/>
            <person name="Reinhardt R."/>
            <person name="Seemueller E."/>
        </authorList>
    </citation>
    <scope>NUCLEOTIDE SEQUENCE [LARGE SCALE GENOMIC DNA]</scope>
    <source>
        <strain>AT</strain>
    </source>
</reference>
<sequence length="304" mass="36076">MKKALVIKFFMGNYLISDIETKDKITAQVKGKLKNYDTHKKELFIIKVGDIVIYENYLDRYLISEVLERHNELNRPNIANFNQVILVFSLYKPRFQFRLLDKFLLILNKYKLKIILIFTKIDLITKKKFLIIQKKISYYENFYRIYYVNSKNKNSTHHLMDIFSNKITVLAGQTGVGKSTFLNSLKPSLQLKTQEISKKLGLGKHTTKNAQLYEFNGGYIADTPGFSKLDLTIFDYEELKFFYPDFLLYSDKCYFKKDCSHIKEINCGVKKALKLSLIPDWRYDNYLKFIEKIQEQKKLNYNKK</sequence>
<organism>
    <name type="scientific">Phytoplasma mali (strain AT)</name>
    <dbReference type="NCBI Taxonomy" id="482235"/>
    <lineage>
        <taxon>Bacteria</taxon>
        <taxon>Bacillati</taxon>
        <taxon>Mycoplasmatota</taxon>
        <taxon>Mollicutes</taxon>
        <taxon>Acholeplasmatales</taxon>
        <taxon>Acholeplasmataceae</taxon>
        <taxon>Candidatus Phytoplasma</taxon>
        <taxon>16SrX (Apple proliferation group)</taxon>
    </lineage>
</organism>
<name>RSGA_PHYMT</name>